<keyword id="KW-0687">Ribonucleoprotein</keyword>
<keyword id="KW-0689">Ribosomal protein</keyword>
<keyword id="KW-0694">RNA-binding</keyword>
<keyword id="KW-0699">rRNA-binding</keyword>
<organism>
    <name type="scientific">Salmonella gallinarum (strain 287/91 / NCTC 13346)</name>
    <dbReference type="NCBI Taxonomy" id="550538"/>
    <lineage>
        <taxon>Bacteria</taxon>
        <taxon>Pseudomonadati</taxon>
        <taxon>Pseudomonadota</taxon>
        <taxon>Gammaproteobacteria</taxon>
        <taxon>Enterobacterales</taxon>
        <taxon>Enterobacteriaceae</taxon>
        <taxon>Salmonella</taxon>
    </lineage>
</organism>
<comment type="function">
    <text evidence="1">One of the primary rRNA binding proteins. Required for association of the 30S and 50S subunits to form the 70S ribosome, for tRNA binding and peptide bond formation. It has been suggested to have peptidyltransferase activity; this is somewhat controversial. Makes several contacts with the 16S rRNA in the 70S ribosome.</text>
</comment>
<comment type="subunit">
    <text evidence="1">Part of the 50S ribosomal subunit. Forms a bridge to the 30S subunit in the 70S ribosome.</text>
</comment>
<comment type="similarity">
    <text evidence="1">Belongs to the universal ribosomal protein uL2 family.</text>
</comment>
<protein>
    <recommendedName>
        <fullName evidence="1">Large ribosomal subunit protein uL2</fullName>
    </recommendedName>
    <alternativeName>
        <fullName evidence="3">50S ribosomal protein L2</fullName>
    </alternativeName>
</protein>
<accession>B5RH18</accession>
<name>RL2_SALG2</name>
<feature type="chain" id="PRO_1000141609" description="Large ribosomal subunit protein uL2">
    <location>
        <begin position="1"/>
        <end position="273"/>
    </location>
</feature>
<feature type="region of interest" description="Disordered" evidence="2">
    <location>
        <begin position="28"/>
        <end position="53"/>
    </location>
</feature>
<feature type="region of interest" description="Disordered" evidence="2">
    <location>
        <begin position="221"/>
        <end position="273"/>
    </location>
</feature>
<feature type="compositionally biased region" description="Low complexity" evidence="2">
    <location>
        <begin position="39"/>
        <end position="48"/>
    </location>
</feature>
<proteinExistence type="inferred from homology"/>
<dbReference type="EMBL" id="AM933173">
    <property type="protein sequence ID" value="CAR39772.1"/>
    <property type="molecule type" value="Genomic_DNA"/>
</dbReference>
<dbReference type="RefSeq" id="WP_000301869.1">
    <property type="nucleotide sequence ID" value="NC_011274.1"/>
</dbReference>
<dbReference type="SMR" id="B5RH18"/>
<dbReference type="GeneID" id="97393170"/>
<dbReference type="KEGG" id="seg:SG4002"/>
<dbReference type="HOGENOM" id="CLU_036235_2_1_6"/>
<dbReference type="Proteomes" id="UP000008321">
    <property type="component" value="Chromosome"/>
</dbReference>
<dbReference type="GO" id="GO:0005829">
    <property type="term" value="C:cytosol"/>
    <property type="evidence" value="ECO:0007669"/>
    <property type="project" value="UniProtKB-ARBA"/>
</dbReference>
<dbReference type="GO" id="GO:0015934">
    <property type="term" value="C:large ribosomal subunit"/>
    <property type="evidence" value="ECO:0007669"/>
    <property type="project" value="InterPro"/>
</dbReference>
<dbReference type="GO" id="GO:0019843">
    <property type="term" value="F:rRNA binding"/>
    <property type="evidence" value="ECO:0007669"/>
    <property type="project" value="UniProtKB-UniRule"/>
</dbReference>
<dbReference type="GO" id="GO:0003735">
    <property type="term" value="F:structural constituent of ribosome"/>
    <property type="evidence" value="ECO:0007669"/>
    <property type="project" value="InterPro"/>
</dbReference>
<dbReference type="GO" id="GO:0016740">
    <property type="term" value="F:transferase activity"/>
    <property type="evidence" value="ECO:0007669"/>
    <property type="project" value="InterPro"/>
</dbReference>
<dbReference type="GO" id="GO:0002181">
    <property type="term" value="P:cytoplasmic translation"/>
    <property type="evidence" value="ECO:0007669"/>
    <property type="project" value="TreeGrafter"/>
</dbReference>
<dbReference type="FunFam" id="2.30.30.30:FF:000001">
    <property type="entry name" value="50S ribosomal protein L2"/>
    <property type="match status" value="1"/>
</dbReference>
<dbReference type="FunFam" id="2.40.50.140:FF:000003">
    <property type="entry name" value="50S ribosomal protein L2"/>
    <property type="match status" value="1"/>
</dbReference>
<dbReference type="FunFam" id="4.10.950.10:FF:000001">
    <property type="entry name" value="50S ribosomal protein L2"/>
    <property type="match status" value="1"/>
</dbReference>
<dbReference type="Gene3D" id="2.30.30.30">
    <property type="match status" value="1"/>
</dbReference>
<dbReference type="Gene3D" id="2.40.50.140">
    <property type="entry name" value="Nucleic acid-binding proteins"/>
    <property type="match status" value="1"/>
</dbReference>
<dbReference type="Gene3D" id="4.10.950.10">
    <property type="entry name" value="Ribosomal protein L2, domain 3"/>
    <property type="match status" value="1"/>
</dbReference>
<dbReference type="HAMAP" id="MF_01320_B">
    <property type="entry name" value="Ribosomal_uL2_B"/>
    <property type="match status" value="1"/>
</dbReference>
<dbReference type="InterPro" id="IPR012340">
    <property type="entry name" value="NA-bd_OB-fold"/>
</dbReference>
<dbReference type="InterPro" id="IPR014722">
    <property type="entry name" value="Rib_uL2_dom2"/>
</dbReference>
<dbReference type="InterPro" id="IPR002171">
    <property type="entry name" value="Ribosomal_uL2"/>
</dbReference>
<dbReference type="InterPro" id="IPR005880">
    <property type="entry name" value="Ribosomal_uL2_bac/org-type"/>
</dbReference>
<dbReference type="InterPro" id="IPR022669">
    <property type="entry name" value="Ribosomal_uL2_C"/>
</dbReference>
<dbReference type="InterPro" id="IPR022671">
    <property type="entry name" value="Ribosomal_uL2_CS"/>
</dbReference>
<dbReference type="InterPro" id="IPR014726">
    <property type="entry name" value="Ribosomal_uL2_dom3"/>
</dbReference>
<dbReference type="InterPro" id="IPR022666">
    <property type="entry name" value="Ribosomal_uL2_RNA-bd_dom"/>
</dbReference>
<dbReference type="InterPro" id="IPR008991">
    <property type="entry name" value="Translation_prot_SH3-like_sf"/>
</dbReference>
<dbReference type="NCBIfam" id="TIGR01171">
    <property type="entry name" value="rplB_bact"/>
    <property type="match status" value="1"/>
</dbReference>
<dbReference type="PANTHER" id="PTHR13691:SF5">
    <property type="entry name" value="LARGE RIBOSOMAL SUBUNIT PROTEIN UL2M"/>
    <property type="match status" value="1"/>
</dbReference>
<dbReference type="PANTHER" id="PTHR13691">
    <property type="entry name" value="RIBOSOMAL PROTEIN L2"/>
    <property type="match status" value="1"/>
</dbReference>
<dbReference type="Pfam" id="PF00181">
    <property type="entry name" value="Ribosomal_L2"/>
    <property type="match status" value="1"/>
</dbReference>
<dbReference type="Pfam" id="PF03947">
    <property type="entry name" value="Ribosomal_L2_C"/>
    <property type="match status" value="1"/>
</dbReference>
<dbReference type="PIRSF" id="PIRSF002158">
    <property type="entry name" value="Ribosomal_L2"/>
    <property type="match status" value="1"/>
</dbReference>
<dbReference type="SMART" id="SM01383">
    <property type="entry name" value="Ribosomal_L2"/>
    <property type="match status" value="1"/>
</dbReference>
<dbReference type="SMART" id="SM01382">
    <property type="entry name" value="Ribosomal_L2_C"/>
    <property type="match status" value="1"/>
</dbReference>
<dbReference type="SUPFAM" id="SSF50249">
    <property type="entry name" value="Nucleic acid-binding proteins"/>
    <property type="match status" value="1"/>
</dbReference>
<dbReference type="SUPFAM" id="SSF50104">
    <property type="entry name" value="Translation proteins SH3-like domain"/>
    <property type="match status" value="1"/>
</dbReference>
<dbReference type="PROSITE" id="PS00467">
    <property type="entry name" value="RIBOSOMAL_L2"/>
    <property type="match status" value="1"/>
</dbReference>
<reference key="1">
    <citation type="journal article" date="2008" name="Genome Res.">
        <title>Comparative genome analysis of Salmonella enteritidis PT4 and Salmonella gallinarum 287/91 provides insights into evolutionary and host adaptation pathways.</title>
        <authorList>
            <person name="Thomson N.R."/>
            <person name="Clayton D.J."/>
            <person name="Windhorst D."/>
            <person name="Vernikos G."/>
            <person name="Davidson S."/>
            <person name="Churcher C."/>
            <person name="Quail M.A."/>
            <person name="Stevens M."/>
            <person name="Jones M.A."/>
            <person name="Watson M."/>
            <person name="Barron A."/>
            <person name="Layton A."/>
            <person name="Pickard D."/>
            <person name="Kingsley R.A."/>
            <person name="Bignell A."/>
            <person name="Clark L."/>
            <person name="Harris B."/>
            <person name="Ormond D."/>
            <person name="Abdellah Z."/>
            <person name="Brooks K."/>
            <person name="Cherevach I."/>
            <person name="Chillingworth T."/>
            <person name="Woodward J."/>
            <person name="Norberczak H."/>
            <person name="Lord A."/>
            <person name="Arrowsmith C."/>
            <person name="Jagels K."/>
            <person name="Moule S."/>
            <person name="Mungall K."/>
            <person name="Saunders M."/>
            <person name="Whitehead S."/>
            <person name="Chabalgoity J.A."/>
            <person name="Maskell D."/>
            <person name="Humphreys T."/>
            <person name="Roberts M."/>
            <person name="Barrow P.A."/>
            <person name="Dougan G."/>
            <person name="Parkhill J."/>
        </authorList>
    </citation>
    <scope>NUCLEOTIDE SEQUENCE [LARGE SCALE GENOMIC DNA]</scope>
    <source>
        <strain>287/91 / NCTC 13346</strain>
    </source>
</reference>
<gene>
    <name evidence="1" type="primary">rplB</name>
    <name type="ordered locus">SG4002</name>
</gene>
<sequence length="273" mass="29820">MAVVKCKPTSPGRRHVVKVVNPELHKGKPFAPLVEKNSKSGGRNNNGRITTRHIGGGHKQAYRIVDFKRNKDGIPAVVERLEYDPNRSANIALVLYKDGERRYILAPKGLKAGDQIQSGVDAAIKAGNTLPMRNIPVGSTVHNVEMKPGKGGQLARSAGTYVQIVARDGAYVTLRLRSGEMRKVEADCRATLGEVGNAEHMLRVLGKAGAARWRGVRPTVRGTAMNPVDHPHGGGEGRNFGKHPVTPWGVQTKGKKTRSNKRTDKFIVRRRSK</sequence>
<evidence type="ECO:0000255" key="1">
    <source>
        <dbReference type="HAMAP-Rule" id="MF_01320"/>
    </source>
</evidence>
<evidence type="ECO:0000256" key="2">
    <source>
        <dbReference type="SAM" id="MobiDB-lite"/>
    </source>
</evidence>
<evidence type="ECO:0000305" key="3"/>